<dbReference type="EC" id="3.1.1.96" evidence="1"/>
<dbReference type="EMBL" id="AM746676">
    <property type="protein sequence ID" value="CAN96611.1"/>
    <property type="molecule type" value="Genomic_DNA"/>
</dbReference>
<dbReference type="RefSeq" id="WP_012239060.1">
    <property type="nucleotide sequence ID" value="NC_010162.1"/>
</dbReference>
<dbReference type="SMR" id="A9GKM6"/>
<dbReference type="STRING" id="448385.sce6442"/>
<dbReference type="KEGG" id="scl:sce6442"/>
<dbReference type="eggNOG" id="COG1490">
    <property type="taxonomic scope" value="Bacteria"/>
</dbReference>
<dbReference type="HOGENOM" id="CLU_076901_1_0_7"/>
<dbReference type="OrthoDB" id="9801395at2"/>
<dbReference type="BioCyc" id="SCEL448385:SCE_RS33035-MONOMER"/>
<dbReference type="Proteomes" id="UP000002139">
    <property type="component" value="Chromosome"/>
</dbReference>
<dbReference type="GO" id="GO:0005737">
    <property type="term" value="C:cytoplasm"/>
    <property type="evidence" value="ECO:0007669"/>
    <property type="project" value="UniProtKB-SubCell"/>
</dbReference>
<dbReference type="GO" id="GO:0051500">
    <property type="term" value="F:D-tyrosyl-tRNA(Tyr) deacylase activity"/>
    <property type="evidence" value="ECO:0007669"/>
    <property type="project" value="TreeGrafter"/>
</dbReference>
<dbReference type="GO" id="GO:0106026">
    <property type="term" value="F:Gly-tRNA(Ala) deacylase activity"/>
    <property type="evidence" value="ECO:0007669"/>
    <property type="project" value="UniProtKB-UniRule"/>
</dbReference>
<dbReference type="GO" id="GO:0043908">
    <property type="term" value="F:Ser(Gly)-tRNA(Ala) hydrolase activity"/>
    <property type="evidence" value="ECO:0007669"/>
    <property type="project" value="UniProtKB-UniRule"/>
</dbReference>
<dbReference type="GO" id="GO:0000049">
    <property type="term" value="F:tRNA binding"/>
    <property type="evidence" value="ECO:0007669"/>
    <property type="project" value="UniProtKB-UniRule"/>
</dbReference>
<dbReference type="GO" id="GO:0019478">
    <property type="term" value="P:D-amino acid catabolic process"/>
    <property type="evidence" value="ECO:0007669"/>
    <property type="project" value="UniProtKB-UniRule"/>
</dbReference>
<dbReference type="FunFam" id="3.50.80.10:FF:000001">
    <property type="entry name" value="D-aminoacyl-tRNA deacylase"/>
    <property type="match status" value="1"/>
</dbReference>
<dbReference type="Gene3D" id="3.50.80.10">
    <property type="entry name" value="D-tyrosyl-tRNA(Tyr) deacylase"/>
    <property type="match status" value="1"/>
</dbReference>
<dbReference type="HAMAP" id="MF_00518">
    <property type="entry name" value="Deacylase_Dtd"/>
    <property type="match status" value="1"/>
</dbReference>
<dbReference type="InterPro" id="IPR003732">
    <property type="entry name" value="Daa-tRNA_deacyls_DTD"/>
</dbReference>
<dbReference type="InterPro" id="IPR023509">
    <property type="entry name" value="DTD-like_sf"/>
</dbReference>
<dbReference type="NCBIfam" id="TIGR00256">
    <property type="entry name" value="D-aminoacyl-tRNA deacylase"/>
    <property type="match status" value="1"/>
</dbReference>
<dbReference type="PANTHER" id="PTHR10472:SF5">
    <property type="entry name" value="D-AMINOACYL-TRNA DEACYLASE 1"/>
    <property type="match status" value="1"/>
</dbReference>
<dbReference type="PANTHER" id="PTHR10472">
    <property type="entry name" value="D-TYROSYL-TRNA TYR DEACYLASE"/>
    <property type="match status" value="1"/>
</dbReference>
<dbReference type="Pfam" id="PF02580">
    <property type="entry name" value="Tyr_Deacylase"/>
    <property type="match status" value="1"/>
</dbReference>
<dbReference type="SUPFAM" id="SSF69500">
    <property type="entry name" value="DTD-like"/>
    <property type="match status" value="1"/>
</dbReference>
<sequence length="150" mass="15980">MRAVVQRALGARVEVGGQVVGAIERGLVAFVGAAKDDDDADADHVASKIAGLRVFSDDAGKMSRALADVRGGGVLAISQFTLFGDVRRGLRPSFDGAMEPVRAEALYDRFVAALRARGLTVATGRFRADMRVFVENDGPVTILIDSKRTF</sequence>
<accession>A9GKM6</accession>
<protein>
    <recommendedName>
        <fullName evidence="1">D-aminoacyl-tRNA deacylase</fullName>
        <shortName evidence="1">DTD</shortName>
        <ecNumber evidence="1">3.1.1.96</ecNumber>
    </recommendedName>
    <alternativeName>
        <fullName evidence="1">Gly-tRNA(Ala) deacylase</fullName>
    </alternativeName>
</protein>
<feature type="chain" id="PRO_1000081669" description="D-aminoacyl-tRNA deacylase">
    <location>
        <begin position="1"/>
        <end position="150"/>
    </location>
</feature>
<feature type="short sequence motif" description="Gly-cisPro motif, important for rejection of L-amino acids" evidence="1">
    <location>
        <begin position="138"/>
        <end position="139"/>
    </location>
</feature>
<gene>
    <name evidence="1" type="primary">dtd</name>
    <name type="ordered locus">sce6442</name>
</gene>
<organism>
    <name type="scientific">Sorangium cellulosum (strain So ce56)</name>
    <name type="common">Polyangium cellulosum (strain So ce56)</name>
    <dbReference type="NCBI Taxonomy" id="448385"/>
    <lineage>
        <taxon>Bacteria</taxon>
        <taxon>Pseudomonadati</taxon>
        <taxon>Myxococcota</taxon>
        <taxon>Polyangia</taxon>
        <taxon>Polyangiales</taxon>
        <taxon>Polyangiaceae</taxon>
        <taxon>Sorangium</taxon>
    </lineage>
</organism>
<proteinExistence type="inferred from homology"/>
<evidence type="ECO:0000255" key="1">
    <source>
        <dbReference type="HAMAP-Rule" id="MF_00518"/>
    </source>
</evidence>
<comment type="function">
    <text evidence="1">An aminoacyl-tRNA editing enzyme that deacylates mischarged D-aminoacyl-tRNAs. Also deacylates mischarged glycyl-tRNA(Ala), protecting cells against glycine mischarging by AlaRS. Acts via tRNA-based rather than protein-based catalysis; rejects L-amino acids rather than detecting D-amino acids in the active site. By recycling D-aminoacyl-tRNA to D-amino acids and free tRNA molecules, this enzyme counteracts the toxicity associated with the formation of D-aminoacyl-tRNA entities in vivo and helps enforce protein L-homochirality.</text>
</comment>
<comment type="catalytic activity">
    <reaction evidence="1">
        <text>glycyl-tRNA(Ala) + H2O = tRNA(Ala) + glycine + H(+)</text>
        <dbReference type="Rhea" id="RHEA:53744"/>
        <dbReference type="Rhea" id="RHEA-COMP:9657"/>
        <dbReference type="Rhea" id="RHEA-COMP:13640"/>
        <dbReference type="ChEBI" id="CHEBI:15377"/>
        <dbReference type="ChEBI" id="CHEBI:15378"/>
        <dbReference type="ChEBI" id="CHEBI:57305"/>
        <dbReference type="ChEBI" id="CHEBI:78442"/>
        <dbReference type="ChEBI" id="CHEBI:78522"/>
        <dbReference type="EC" id="3.1.1.96"/>
    </reaction>
</comment>
<comment type="catalytic activity">
    <reaction evidence="1">
        <text>a D-aminoacyl-tRNA + H2O = a tRNA + a D-alpha-amino acid + H(+)</text>
        <dbReference type="Rhea" id="RHEA:13953"/>
        <dbReference type="Rhea" id="RHEA-COMP:10123"/>
        <dbReference type="Rhea" id="RHEA-COMP:10124"/>
        <dbReference type="ChEBI" id="CHEBI:15377"/>
        <dbReference type="ChEBI" id="CHEBI:15378"/>
        <dbReference type="ChEBI" id="CHEBI:59871"/>
        <dbReference type="ChEBI" id="CHEBI:78442"/>
        <dbReference type="ChEBI" id="CHEBI:79333"/>
        <dbReference type="EC" id="3.1.1.96"/>
    </reaction>
</comment>
<comment type="subunit">
    <text evidence="1">Homodimer.</text>
</comment>
<comment type="subcellular location">
    <subcellularLocation>
        <location evidence="1">Cytoplasm</location>
    </subcellularLocation>
</comment>
<comment type="domain">
    <text evidence="1">A Gly-cisPro motif from one monomer fits into the active site of the other monomer to allow specific chiral rejection of L-amino acids.</text>
</comment>
<comment type="similarity">
    <text evidence="1">Belongs to the DTD family.</text>
</comment>
<name>DTD_SORC5</name>
<keyword id="KW-0963">Cytoplasm</keyword>
<keyword id="KW-0378">Hydrolase</keyword>
<keyword id="KW-1185">Reference proteome</keyword>
<keyword id="KW-0694">RNA-binding</keyword>
<keyword id="KW-0820">tRNA-binding</keyword>
<reference key="1">
    <citation type="journal article" date="2007" name="Nat. Biotechnol.">
        <title>Complete genome sequence of the myxobacterium Sorangium cellulosum.</title>
        <authorList>
            <person name="Schneiker S."/>
            <person name="Perlova O."/>
            <person name="Kaiser O."/>
            <person name="Gerth K."/>
            <person name="Alici A."/>
            <person name="Altmeyer M.O."/>
            <person name="Bartels D."/>
            <person name="Bekel T."/>
            <person name="Beyer S."/>
            <person name="Bode E."/>
            <person name="Bode H.B."/>
            <person name="Bolten C.J."/>
            <person name="Choudhuri J.V."/>
            <person name="Doss S."/>
            <person name="Elnakady Y.A."/>
            <person name="Frank B."/>
            <person name="Gaigalat L."/>
            <person name="Goesmann A."/>
            <person name="Groeger C."/>
            <person name="Gross F."/>
            <person name="Jelsbak L."/>
            <person name="Jelsbak L."/>
            <person name="Kalinowski J."/>
            <person name="Kegler C."/>
            <person name="Knauber T."/>
            <person name="Konietzny S."/>
            <person name="Kopp M."/>
            <person name="Krause L."/>
            <person name="Krug D."/>
            <person name="Linke B."/>
            <person name="Mahmud T."/>
            <person name="Martinez-Arias R."/>
            <person name="McHardy A.C."/>
            <person name="Merai M."/>
            <person name="Meyer F."/>
            <person name="Mormann S."/>
            <person name="Munoz-Dorado J."/>
            <person name="Perez J."/>
            <person name="Pradella S."/>
            <person name="Rachid S."/>
            <person name="Raddatz G."/>
            <person name="Rosenau F."/>
            <person name="Rueckert C."/>
            <person name="Sasse F."/>
            <person name="Scharfe M."/>
            <person name="Schuster S.C."/>
            <person name="Suen G."/>
            <person name="Treuner-Lange A."/>
            <person name="Velicer G.J."/>
            <person name="Vorholter F.-J."/>
            <person name="Weissman K.J."/>
            <person name="Welch R.D."/>
            <person name="Wenzel S.C."/>
            <person name="Whitworth D.E."/>
            <person name="Wilhelm S."/>
            <person name="Wittmann C."/>
            <person name="Bloecker H."/>
            <person name="Puehler A."/>
            <person name="Mueller R."/>
        </authorList>
    </citation>
    <scope>NUCLEOTIDE SEQUENCE [LARGE SCALE GENOMIC DNA]</scope>
    <source>
        <strain>So ce56</strain>
    </source>
</reference>